<protein>
    <recommendedName>
        <fullName evidence="1">UPF0114 protein YqhA</fullName>
    </recommendedName>
</protein>
<evidence type="ECO:0000255" key="1">
    <source>
        <dbReference type="HAMAP-Rule" id="MF_00143"/>
    </source>
</evidence>
<reference key="1">
    <citation type="journal article" date="2009" name="J. Bacteriol.">
        <title>Genomic sequencing reveals regulatory mutations and recombinational events in the widely used MC4100 lineage of Escherichia coli K-12.</title>
        <authorList>
            <person name="Ferenci T."/>
            <person name="Zhou Z."/>
            <person name="Betteridge T."/>
            <person name="Ren Y."/>
            <person name="Liu Y."/>
            <person name="Feng L."/>
            <person name="Reeves P.R."/>
            <person name="Wang L."/>
        </authorList>
    </citation>
    <scope>NUCLEOTIDE SEQUENCE [LARGE SCALE GENOMIC DNA]</scope>
    <source>
        <strain>K12 / MC4100 / BW2952</strain>
    </source>
</reference>
<sequence length="164" mass="18641">MERFLENAMYASRWLLAPVYFGLSLALVALALKFFQEIIHVLPNIFSMAESDLILVLLSLVDMTLVGGLLVMVMFSGYENFVSQLDISENKEKLNWLGKMDATSLKNKVAASIVAISSIHLLRVFMDAKNVPDNKLMWYVIIHLTFVLSAFVMGYLDRLTRHNH</sequence>
<accession>C4ZQS4</accession>
<organism>
    <name type="scientific">Escherichia coli (strain K12 / MC4100 / BW2952)</name>
    <dbReference type="NCBI Taxonomy" id="595496"/>
    <lineage>
        <taxon>Bacteria</taxon>
        <taxon>Pseudomonadati</taxon>
        <taxon>Pseudomonadota</taxon>
        <taxon>Gammaproteobacteria</taxon>
        <taxon>Enterobacterales</taxon>
        <taxon>Enterobacteriaceae</taxon>
        <taxon>Escherichia</taxon>
    </lineage>
</organism>
<name>YQHA_ECOBW</name>
<dbReference type="EMBL" id="CP001396">
    <property type="protein sequence ID" value="ACR62191.1"/>
    <property type="molecule type" value="Genomic_DNA"/>
</dbReference>
<dbReference type="RefSeq" id="WP_000439331.1">
    <property type="nucleotide sequence ID" value="NC_012759.1"/>
</dbReference>
<dbReference type="KEGG" id="ebw:BWG_2718"/>
<dbReference type="HOGENOM" id="CLU_097887_1_1_6"/>
<dbReference type="GO" id="GO:0005886">
    <property type="term" value="C:plasma membrane"/>
    <property type="evidence" value="ECO:0007669"/>
    <property type="project" value="UniProtKB-SubCell"/>
</dbReference>
<dbReference type="HAMAP" id="MF_00143">
    <property type="entry name" value="UPF0114"/>
    <property type="match status" value="1"/>
</dbReference>
<dbReference type="InterPro" id="IPR005134">
    <property type="entry name" value="UPF0114"/>
</dbReference>
<dbReference type="InterPro" id="IPR020761">
    <property type="entry name" value="UPF0114_bac"/>
</dbReference>
<dbReference type="NCBIfam" id="TIGR00645">
    <property type="entry name" value="HI0507"/>
    <property type="match status" value="1"/>
</dbReference>
<dbReference type="PANTHER" id="PTHR38596">
    <property type="entry name" value="UPF0114 PROTEIN YQHA"/>
    <property type="match status" value="1"/>
</dbReference>
<dbReference type="PANTHER" id="PTHR38596:SF1">
    <property type="entry name" value="UPF0114 PROTEIN YQHA"/>
    <property type="match status" value="1"/>
</dbReference>
<dbReference type="Pfam" id="PF03350">
    <property type="entry name" value="UPF0114"/>
    <property type="match status" value="1"/>
</dbReference>
<gene>
    <name evidence="1" type="primary">yqhA</name>
    <name type="ordered locus">BWG_2718</name>
</gene>
<feature type="chain" id="PRO_1000203294" description="UPF0114 protein YqhA">
    <location>
        <begin position="1"/>
        <end position="164"/>
    </location>
</feature>
<feature type="transmembrane region" description="Helical" evidence="1">
    <location>
        <begin position="15"/>
        <end position="35"/>
    </location>
</feature>
<feature type="transmembrane region" description="Helical" evidence="1">
    <location>
        <begin position="53"/>
        <end position="73"/>
    </location>
</feature>
<feature type="transmembrane region" description="Helical" evidence="1">
    <location>
        <begin position="136"/>
        <end position="156"/>
    </location>
</feature>
<comment type="subcellular location">
    <subcellularLocation>
        <location evidence="1">Cell membrane</location>
        <topology evidence="1">Multi-pass membrane protein</topology>
    </subcellularLocation>
</comment>
<comment type="similarity">
    <text evidence="1">Belongs to the UPF0114 family.</text>
</comment>
<keyword id="KW-1003">Cell membrane</keyword>
<keyword id="KW-0472">Membrane</keyword>
<keyword id="KW-0812">Transmembrane</keyword>
<keyword id="KW-1133">Transmembrane helix</keyword>
<proteinExistence type="inferred from homology"/>